<evidence type="ECO:0000305" key="1"/>
<organism>
    <name type="scientific">Caulobacter vibrioides (strain ATCC 19089 / CIP 103742 / CB 15)</name>
    <name type="common">Caulobacter crescentus</name>
    <dbReference type="NCBI Taxonomy" id="190650"/>
    <lineage>
        <taxon>Bacteria</taxon>
        <taxon>Pseudomonadati</taxon>
        <taxon>Pseudomonadota</taxon>
        <taxon>Alphaproteobacteria</taxon>
        <taxon>Caulobacterales</taxon>
        <taxon>Caulobacteraceae</taxon>
        <taxon>Caulobacter</taxon>
    </lineage>
</organism>
<gene>
    <name type="ordered locus">CC_2377</name>
</gene>
<feature type="chain" id="PRO_0000138462" description="UPF0145 protein CC_2377">
    <location>
        <begin position="1"/>
        <end position="105"/>
    </location>
</feature>
<keyword id="KW-1185">Reference proteome</keyword>
<reference key="1">
    <citation type="journal article" date="2001" name="Proc. Natl. Acad. Sci. U.S.A.">
        <title>Complete genome sequence of Caulobacter crescentus.</title>
        <authorList>
            <person name="Nierman W.C."/>
            <person name="Feldblyum T.V."/>
            <person name="Laub M.T."/>
            <person name="Paulsen I.T."/>
            <person name="Nelson K.E."/>
            <person name="Eisen J.A."/>
            <person name="Heidelberg J.F."/>
            <person name="Alley M.R.K."/>
            <person name="Ohta N."/>
            <person name="Maddock J.R."/>
            <person name="Potocka I."/>
            <person name="Nelson W.C."/>
            <person name="Newton A."/>
            <person name="Stephens C."/>
            <person name="Phadke N.D."/>
            <person name="Ely B."/>
            <person name="DeBoy R.T."/>
            <person name="Dodson R.J."/>
            <person name="Durkin A.S."/>
            <person name="Gwinn M.L."/>
            <person name="Haft D.H."/>
            <person name="Kolonay J.F."/>
            <person name="Smit J."/>
            <person name="Craven M.B."/>
            <person name="Khouri H.M."/>
            <person name="Shetty J."/>
            <person name="Berry K.J."/>
            <person name="Utterback T.R."/>
            <person name="Tran K."/>
            <person name="Wolf A.M."/>
            <person name="Vamathevan J.J."/>
            <person name="Ermolaeva M.D."/>
            <person name="White O."/>
            <person name="Salzberg S.L."/>
            <person name="Venter J.C."/>
            <person name="Shapiro L."/>
            <person name="Fraser C.M."/>
        </authorList>
    </citation>
    <scope>NUCLEOTIDE SEQUENCE [LARGE SCALE GENOMIC DNA]</scope>
    <source>
        <strain>ATCC 19089 / CIP 103742 / CB 15</strain>
    </source>
</reference>
<name>Y2377_CAUVC</name>
<comment type="similarity">
    <text evidence="1">Belongs to the UPF0145 family.</text>
</comment>
<proteinExistence type="inferred from homology"/>
<sequence length="105" mass="11269">MLITTTPFIEGRPVQEYKGAIYAQSILGANVVLDLLAAIRDFIGGHSKSYERVLARAREDAMKNLIKEAEKLGANAILAVDLDYNTVGPQGSMMMVSVSGTAVVL</sequence>
<dbReference type="EMBL" id="AE005673">
    <property type="protein sequence ID" value="AAK24348.1"/>
    <property type="molecule type" value="Genomic_DNA"/>
</dbReference>
<dbReference type="PIR" id="H87543">
    <property type="entry name" value="H87543"/>
</dbReference>
<dbReference type="RefSeq" id="NP_421180.1">
    <property type="nucleotide sequence ID" value="NC_002696.2"/>
</dbReference>
<dbReference type="RefSeq" id="WP_010920235.1">
    <property type="nucleotide sequence ID" value="NC_002696.2"/>
</dbReference>
<dbReference type="SMR" id="Q9A5S0"/>
<dbReference type="STRING" id="190650.CC_2377"/>
<dbReference type="EnsemblBacteria" id="AAK24348">
    <property type="protein sequence ID" value="AAK24348"/>
    <property type="gene ID" value="CC_2377"/>
</dbReference>
<dbReference type="KEGG" id="ccr:CC_2377"/>
<dbReference type="PATRIC" id="fig|190650.5.peg.2399"/>
<dbReference type="eggNOG" id="COG0393">
    <property type="taxonomic scope" value="Bacteria"/>
</dbReference>
<dbReference type="HOGENOM" id="CLU_117144_3_2_5"/>
<dbReference type="BioCyc" id="CAULO:CC2377-MONOMER"/>
<dbReference type="Proteomes" id="UP000001816">
    <property type="component" value="Chromosome"/>
</dbReference>
<dbReference type="Gene3D" id="3.30.110.70">
    <property type="entry name" value="Hypothetical protein apc22750. Chain B"/>
    <property type="match status" value="1"/>
</dbReference>
<dbReference type="HAMAP" id="MF_00338">
    <property type="entry name" value="UPF0145"/>
    <property type="match status" value="1"/>
</dbReference>
<dbReference type="InterPro" id="IPR035439">
    <property type="entry name" value="UPF0145_dom_sf"/>
</dbReference>
<dbReference type="InterPro" id="IPR002765">
    <property type="entry name" value="UPF0145_YbjQ-like"/>
</dbReference>
<dbReference type="PANTHER" id="PTHR34068">
    <property type="entry name" value="UPF0145 PROTEIN YBJQ"/>
    <property type="match status" value="1"/>
</dbReference>
<dbReference type="PANTHER" id="PTHR34068:SF1">
    <property type="entry name" value="UPF0145 PROTEIN YBJQ"/>
    <property type="match status" value="1"/>
</dbReference>
<dbReference type="Pfam" id="PF01906">
    <property type="entry name" value="YbjQ_1"/>
    <property type="match status" value="1"/>
</dbReference>
<dbReference type="SUPFAM" id="SSF117782">
    <property type="entry name" value="YbjQ-like"/>
    <property type="match status" value="1"/>
</dbReference>
<protein>
    <recommendedName>
        <fullName>UPF0145 protein CC_2377</fullName>
    </recommendedName>
</protein>
<accession>Q9A5S0</accession>